<gene>
    <name evidence="1" type="primary">xpt</name>
    <name type="ordered locus">NT01CX_0402</name>
</gene>
<organism>
    <name type="scientific">Clostridium novyi (strain NT)</name>
    <dbReference type="NCBI Taxonomy" id="386415"/>
    <lineage>
        <taxon>Bacteria</taxon>
        <taxon>Bacillati</taxon>
        <taxon>Bacillota</taxon>
        <taxon>Clostridia</taxon>
        <taxon>Eubacteriales</taxon>
        <taxon>Clostridiaceae</taxon>
        <taxon>Clostridium</taxon>
    </lineage>
</organism>
<sequence>MELLKKRILEDGNVFGEDVLKVDSFLNHQIDVKLLNEIGKEFKRRFENKEITKILTIEASGIGIACIAAQYFNVPVVFAKKHQGSNMDENTYESEVFSFTKNKSYKVRVSKKYINTEDKVLIIDDFLANGNAACGLIDIVREANGEVQGVGIVIEKGFQNGRKTIENKGVTVESLAIVESMKNGKVIFKN</sequence>
<dbReference type="EC" id="2.4.2.22" evidence="1"/>
<dbReference type="EMBL" id="CP000382">
    <property type="protein sequence ID" value="ABK61216.1"/>
    <property type="molecule type" value="Genomic_DNA"/>
</dbReference>
<dbReference type="RefSeq" id="WP_011722878.1">
    <property type="nucleotide sequence ID" value="NC_008593.1"/>
</dbReference>
<dbReference type="SMR" id="A0Q2P2"/>
<dbReference type="STRING" id="386415.NT01CX_0402"/>
<dbReference type="KEGG" id="cno:NT01CX_0402"/>
<dbReference type="PATRIC" id="fig|386415.7.peg.1927"/>
<dbReference type="eggNOG" id="COG0503">
    <property type="taxonomic scope" value="Bacteria"/>
</dbReference>
<dbReference type="HOGENOM" id="CLU_099015_0_0_9"/>
<dbReference type="UniPathway" id="UPA00602">
    <property type="reaction ID" value="UER00658"/>
</dbReference>
<dbReference type="Proteomes" id="UP000008220">
    <property type="component" value="Chromosome"/>
</dbReference>
<dbReference type="GO" id="GO:0005737">
    <property type="term" value="C:cytoplasm"/>
    <property type="evidence" value="ECO:0007669"/>
    <property type="project" value="UniProtKB-SubCell"/>
</dbReference>
<dbReference type="GO" id="GO:0000310">
    <property type="term" value="F:xanthine phosphoribosyltransferase activity"/>
    <property type="evidence" value="ECO:0007669"/>
    <property type="project" value="UniProtKB-UniRule"/>
</dbReference>
<dbReference type="GO" id="GO:0006166">
    <property type="term" value="P:purine ribonucleoside salvage"/>
    <property type="evidence" value="ECO:0007669"/>
    <property type="project" value="UniProtKB-KW"/>
</dbReference>
<dbReference type="GO" id="GO:0046110">
    <property type="term" value="P:xanthine metabolic process"/>
    <property type="evidence" value="ECO:0007669"/>
    <property type="project" value="InterPro"/>
</dbReference>
<dbReference type="GO" id="GO:0032265">
    <property type="term" value="P:XMP salvage"/>
    <property type="evidence" value="ECO:0007669"/>
    <property type="project" value="UniProtKB-UniRule"/>
</dbReference>
<dbReference type="CDD" id="cd06223">
    <property type="entry name" value="PRTases_typeI"/>
    <property type="match status" value="1"/>
</dbReference>
<dbReference type="Gene3D" id="3.40.50.2020">
    <property type="match status" value="1"/>
</dbReference>
<dbReference type="HAMAP" id="MF_01184">
    <property type="entry name" value="XPRTase"/>
    <property type="match status" value="1"/>
</dbReference>
<dbReference type="InterPro" id="IPR000836">
    <property type="entry name" value="PRibTrfase_dom"/>
</dbReference>
<dbReference type="InterPro" id="IPR029057">
    <property type="entry name" value="PRTase-like"/>
</dbReference>
<dbReference type="InterPro" id="IPR050118">
    <property type="entry name" value="Pur/Pyrimidine_PRTase"/>
</dbReference>
<dbReference type="InterPro" id="IPR010079">
    <property type="entry name" value="Xanthine_PRibTrfase"/>
</dbReference>
<dbReference type="NCBIfam" id="NF006671">
    <property type="entry name" value="PRK09219.1"/>
    <property type="match status" value="1"/>
</dbReference>
<dbReference type="NCBIfam" id="TIGR01744">
    <property type="entry name" value="XPRTase"/>
    <property type="match status" value="1"/>
</dbReference>
<dbReference type="PANTHER" id="PTHR43864">
    <property type="entry name" value="HYPOXANTHINE/GUANINE PHOSPHORIBOSYLTRANSFERASE"/>
    <property type="match status" value="1"/>
</dbReference>
<dbReference type="PANTHER" id="PTHR43864:SF1">
    <property type="entry name" value="XANTHINE PHOSPHORIBOSYLTRANSFERASE"/>
    <property type="match status" value="1"/>
</dbReference>
<dbReference type="Pfam" id="PF00156">
    <property type="entry name" value="Pribosyltran"/>
    <property type="match status" value="1"/>
</dbReference>
<dbReference type="SUPFAM" id="SSF53271">
    <property type="entry name" value="PRTase-like"/>
    <property type="match status" value="1"/>
</dbReference>
<reference key="1">
    <citation type="journal article" date="2006" name="Nat. Biotechnol.">
        <title>The genome and transcriptomes of the anti-tumor agent Clostridium novyi-NT.</title>
        <authorList>
            <person name="Bettegowda C."/>
            <person name="Huang X."/>
            <person name="Lin J."/>
            <person name="Cheong I."/>
            <person name="Kohli M."/>
            <person name="Szabo S.A."/>
            <person name="Zhang X."/>
            <person name="Diaz L.A. Jr."/>
            <person name="Velculescu V.E."/>
            <person name="Parmigiani G."/>
            <person name="Kinzler K.W."/>
            <person name="Vogelstein B."/>
            <person name="Zhou S."/>
        </authorList>
    </citation>
    <scope>NUCLEOTIDE SEQUENCE [LARGE SCALE GENOMIC DNA]</scope>
    <source>
        <strain>NT</strain>
    </source>
</reference>
<proteinExistence type="inferred from homology"/>
<comment type="function">
    <text evidence="1">Converts the preformed base xanthine, a product of nucleic acid breakdown, to xanthosine 5'-monophosphate (XMP), so it can be reused for RNA or DNA synthesis.</text>
</comment>
<comment type="catalytic activity">
    <reaction evidence="1">
        <text>XMP + diphosphate = xanthine + 5-phospho-alpha-D-ribose 1-diphosphate</text>
        <dbReference type="Rhea" id="RHEA:10800"/>
        <dbReference type="ChEBI" id="CHEBI:17712"/>
        <dbReference type="ChEBI" id="CHEBI:33019"/>
        <dbReference type="ChEBI" id="CHEBI:57464"/>
        <dbReference type="ChEBI" id="CHEBI:58017"/>
        <dbReference type="EC" id="2.4.2.22"/>
    </reaction>
</comment>
<comment type="pathway">
    <text evidence="1">Purine metabolism; XMP biosynthesis via salvage pathway; XMP from xanthine: step 1/1.</text>
</comment>
<comment type="subunit">
    <text evidence="1">Homodimer.</text>
</comment>
<comment type="subcellular location">
    <subcellularLocation>
        <location evidence="1">Cytoplasm</location>
    </subcellularLocation>
</comment>
<comment type="similarity">
    <text evidence="1">Belongs to the purine/pyrimidine phosphoribosyltransferase family. Xpt subfamily.</text>
</comment>
<evidence type="ECO:0000255" key="1">
    <source>
        <dbReference type="HAMAP-Rule" id="MF_01184"/>
    </source>
</evidence>
<protein>
    <recommendedName>
        <fullName evidence="1">Xanthine phosphoribosyltransferase</fullName>
        <shortName evidence="1">XPRTase</shortName>
        <ecNumber evidence="1">2.4.2.22</ecNumber>
    </recommendedName>
</protein>
<accession>A0Q2P2</accession>
<keyword id="KW-0963">Cytoplasm</keyword>
<keyword id="KW-0328">Glycosyltransferase</keyword>
<keyword id="KW-0660">Purine salvage</keyword>
<keyword id="KW-1185">Reference proteome</keyword>
<keyword id="KW-0808">Transferase</keyword>
<feature type="chain" id="PRO_0000339686" description="Xanthine phosphoribosyltransferase">
    <location>
        <begin position="1"/>
        <end position="190"/>
    </location>
</feature>
<feature type="binding site" evidence="1">
    <location>
        <position position="20"/>
    </location>
    <ligand>
        <name>xanthine</name>
        <dbReference type="ChEBI" id="CHEBI:17712"/>
    </ligand>
</feature>
<feature type="binding site" evidence="1">
    <location>
        <position position="27"/>
    </location>
    <ligand>
        <name>xanthine</name>
        <dbReference type="ChEBI" id="CHEBI:17712"/>
    </ligand>
</feature>
<feature type="binding site" evidence="1">
    <location>
        <begin position="128"/>
        <end position="132"/>
    </location>
    <ligand>
        <name>5-phospho-alpha-D-ribose 1-diphosphate</name>
        <dbReference type="ChEBI" id="CHEBI:58017"/>
    </ligand>
</feature>
<feature type="binding site" evidence="1">
    <location>
        <position position="156"/>
    </location>
    <ligand>
        <name>xanthine</name>
        <dbReference type="ChEBI" id="CHEBI:17712"/>
    </ligand>
</feature>
<name>XPT_CLONN</name>